<gene>
    <name type="primary">CHRNA2</name>
</gene>
<evidence type="ECO:0000250" key="1">
    <source>
        <dbReference type="UniProtKB" id="P02709"/>
    </source>
</evidence>
<evidence type="ECO:0000250" key="2">
    <source>
        <dbReference type="UniProtKB" id="P43681"/>
    </source>
</evidence>
<evidence type="ECO:0000250" key="3">
    <source>
        <dbReference type="UniProtKB" id="Q15822"/>
    </source>
</evidence>
<evidence type="ECO:0000255" key="4"/>
<evidence type="ECO:0000256" key="5">
    <source>
        <dbReference type="SAM" id="MobiDB-lite"/>
    </source>
</evidence>
<evidence type="ECO:0000305" key="6"/>
<keyword id="KW-1003">Cell membrane</keyword>
<keyword id="KW-1015">Disulfide bond</keyword>
<keyword id="KW-0325">Glycoprotein</keyword>
<keyword id="KW-0407">Ion channel</keyword>
<keyword id="KW-0406">Ion transport</keyword>
<keyword id="KW-1071">Ligand-gated ion channel</keyword>
<keyword id="KW-0472">Membrane</keyword>
<keyword id="KW-0675">Receptor</keyword>
<keyword id="KW-1185">Reference proteome</keyword>
<keyword id="KW-0732">Signal</keyword>
<keyword id="KW-0770">Synapse</keyword>
<keyword id="KW-0812">Transmembrane</keyword>
<keyword id="KW-1133">Transmembrane helix</keyword>
<keyword id="KW-0813">Transport</keyword>
<dbReference type="EMBL" id="AY665276">
    <property type="protein sequence ID" value="AAV74314.1"/>
    <property type="molecule type" value="mRNA"/>
</dbReference>
<dbReference type="RefSeq" id="NP_001029107.1">
    <property type="nucleotide sequence ID" value="NM_001033935.1"/>
</dbReference>
<dbReference type="RefSeq" id="XP_009453308.1">
    <property type="nucleotide sequence ID" value="XM_009455033.5"/>
</dbReference>
<dbReference type="SMR" id="Q5IS52"/>
<dbReference type="FunCoup" id="Q5IS52">
    <property type="interactions" value="487"/>
</dbReference>
<dbReference type="STRING" id="9598.ENSPTRP00000034420"/>
<dbReference type="GlyCosmos" id="Q5IS52">
    <property type="glycosylation" value="3 sites, No reported glycans"/>
</dbReference>
<dbReference type="PaxDb" id="9598-ENSPTRP00000034420"/>
<dbReference type="Ensembl" id="ENSPTRT00000037245.4">
    <property type="protein sequence ID" value="ENSPTRP00000034420.3"/>
    <property type="gene ID" value="ENSPTRG00000020105.4"/>
</dbReference>
<dbReference type="GeneID" id="472725"/>
<dbReference type="KEGG" id="ptr:472725"/>
<dbReference type="CTD" id="1135"/>
<dbReference type="VGNC" id="VGNC:7589">
    <property type="gene designation" value="CHRNA2"/>
</dbReference>
<dbReference type="eggNOG" id="KOG3645">
    <property type="taxonomic scope" value="Eukaryota"/>
</dbReference>
<dbReference type="GeneTree" id="ENSGT00940000158299"/>
<dbReference type="HOGENOM" id="CLU_018074_1_0_1"/>
<dbReference type="InParanoid" id="Q5IS52"/>
<dbReference type="OMA" id="SSYHWLE"/>
<dbReference type="OrthoDB" id="6163at9604"/>
<dbReference type="TreeFam" id="TF315605"/>
<dbReference type="Proteomes" id="UP000002277">
    <property type="component" value="Chromosome 8"/>
</dbReference>
<dbReference type="Bgee" id="ENSPTRG00000020105">
    <property type="expression patterns" value="Expressed in superior frontal gyrus and 4 other cell types or tissues"/>
</dbReference>
<dbReference type="GO" id="GO:0005892">
    <property type="term" value="C:acetylcholine-gated channel complex"/>
    <property type="evidence" value="ECO:0000318"/>
    <property type="project" value="GO_Central"/>
</dbReference>
<dbReference type="GO" id="GO:0034703">
    <property type="term" value="C:cation channel complex"/>
    <property type="evidence" value="ECO:0007669"/>
    <property type="project" value="Ensembl"/>
</dbReference>
<dbReference type="GO" id="GO:0045171">
    <property type="term" value="C:intercellular bridge"/>
    <property type="evidence" value="ECO:0007669"/>
    <property type="project" value="Ensembl"/>
</dbReference>
<dbReference type="GO" id="GO:0043005">
    <property type="term" value="C:neuron projection"/>
    <property type="evidence" value="ECO:0000318"/>
    <property type="project" value="GO_Central"/>
</dbReference>
<dbReference type="GO" id="GO:0098878">
    <property type="term" value="C:neurotransmitter receptor complex"/>
    <property type="evidence" value="ECO:0007669"/>
    <property type="project" value="Ensembl"/>
</dbReference>
<dbReference type="GO" id="GO:0005654">
    <property type="term" value="C:nucleoplasm"/>
    <property type="evidence" value="ECO:0007669"/>
    <property type="project" value="Ensembl"/>
</dbReference>
<dbReference type="GO" id="GO:0005886">
    <property type="term" value="C:plasma membrane"/>
    <property type="evidence" value="ECO:0000318"/>
    <property type="project" value="GO_Central"/>
</dbReference>
<dbReference type="GO" id="GO:0045211">
    <property type="term" value="C:postsynaptic membrane"/>
    <property type="evidence" value="ECO:0007669"/>
    <property type="project" value="UniProtKB-KW"/>
</dbReference>
<dbReference type="GO" id="GO:0045202">
    <property type="term" value="C:synapse"/>
    <property type="evidence" value="ECO:0000318"/>
    <property type="project" value="GO_Central"/>
</dbReference>
<dbReference type="GO" id="GO:0015464">
    <property type="term" value="F:acetylcholine receptor activity"/>
    <property type="evidence" value="ECO:0007669"/>
    <property type="project" value="Ensembl"/>
</dbReference>
<dbReference type="GO" id="GO:0022848">
    <property type="term" value="F:acetylcholine-gated monoatomic cation-selective channel activity"/>
    <property type="evidence" value="ECO:0000318"/>
    <property type="project" value="GO_Central"/>
</dbReference>
<dbReference type="GO" id="GO:0095500">
    <property type="term" value="P:acetylcholine receptor signaling pathway"/>
    <property type="evidence" value="ECO:0000318"/>
    <property type="project" value="GO_Central"/>
</dbReference>
<dbReference type="GO" id="GO:0051899">
    <property type="term" value="P:membrane depolarization"/>
    <property type="evidence" value="ECO:0000318"/>
    <property type="project" value="GO_Central"/>
</dbReference>
<dbReference type="GO" id="GO:0034220">
    <property type="term" value="P:monoatomic ion transmembrane transport"/>
    <property type="evidence" value="ECO:0000318"/>
    <property type="project" value="GO_Central"/>
</dbReference>
<dbReference type="GO" id="GO:0007274">
    <property type="term" value="P:neuromuscular synaptic transmission"/>
    <property type="evidence" value="ECO:0000318"/>
    <property type="project" value="GO_Central"/>
</dbReference>
<dbReference type="GO" id="GO:0035094">
    <property type="term" value="P:response to nicotine"/>
    <property type="evidence" value="ECO:0000318"/>
    <property type="project" value="GO_Central"/>
</dbReference>
<dbReference type="GO" id="GO:0007271">
    <property type="term" value="P:synaptic transmission, cholinergic"/>
    <property type="evidence" value="ECO:0000318"/>
    <property type="project" value="GO_Central"/>
</dbReference>
<dbReference type="CDD" id="cd19015">
    <property type="entry name" value="LGIC_ECD_nAChR_A2"/>
    <property type="match status" value="1"/>
</dbReference>
<dbReference type="CDD" id="cd19064">
    <property type="entry name" value="LGIC_TM_nAChR"/>
    <property type="match status" value="1"/>
</dbReference>
<dbReference type="FunFam" id="1.20.58.390:FF:000014">
    <property type="entry name" value="Neuronal nicotinic acetylcholine receptor alpha4 subunit"/>
    <property type="match status" value="1"/>
</dbReference>
<dbReference type="FunFam" id="2.70.170.10:FF:000005">
    <property type="entry name" value="Neuronal nicotinic acetylcholine receptor alpha4 subunit"/>
    <property type="match status" value="1"/>
</dbReference>
<dbReference type="FunFam" id="1.20.58.390:FF:000001">
    <property type="entry name" value="Neuronal nicotinic acetylcholine receptor subunit 3"/>
    <property type="match status" value="1"/>
</dbReference>
<dbReference type="Gene3D" id="2.70.170.10">
    <property type="entry name" value="Neurotransmitter-gated ion-channel ligand-binding domain"/>
    <property type="match status" value="1"/>
</dbReference>
<dbReference type="Gene3D" id="1.20.58.390">
    <property type="entry name" value="Neurotransmitter-gated ion-channel transmembrane domain"/>
    <property type="match status" value="2"/>
</dbReference>
<dbReference type="InterPro" id="IPR006202">
    <property type="entry name" value="Neur_chan_lig-bd"/>
</dbReference>
<dbReference type="InterPro" id="IPR036734">
    <property type="entry name" value="Neur_chan_lig-bd_sf"/>
</dbReference>
<dbReference type="InterPro" id="IPR006201">
    <property type="entry name" value="Neur_channel"/>
</dbReference>
<dbReference type="InterPro" id="IPR036719">
    <property type="entry name" value="Neuro-gated_channel_TM_sf"/>
</dbReference>
<dbReference type="InterPro" id="IPR038050">
    <property type="entry name" value="Neuro_actylchol_rec"/>
</dbReference>
<dbReference type="InterPro" id="IPR006029">
    <property type="entry name" value="Neurotrans-gated_channel_TM"/>
</dbReference>
<dbReference type="InterPro" id="IPR018000">
    <property type="entry name" value="Neurotransmitter_ion_chnl_CS"/>
</dbReference>
<dbReference type="InterPro" id="IPR002394">
    <property type="entry name" value="Nicotinic_acetylcholine_rcpt"/>
</dbReference>
<dbReference type="NCBIfam" id="TIGR00860">
    <property type="entry name" value="LIC"/>
    <property type="match status" value="1"/>
</dbReference>
<dbReference type="PANTHER" id="PTHR18945">
    <property type="entry name" value="NEUROTRANSMITTER GATED ION CHANNEL"/>
    <property type="match status" value="1"/>
</dbReference>
<dbReference type="Pfam" id="PF02931">
    <property type="entry name" value="Neur_chan_LBD"/>
    <property type="match status" value="1"/>
</dbReference>
<dbReference type="Pfam" id="PF02932">
    <property type="entry name" value="Neur_chan_memb"/>
    <property type="match status" value="1"/>
</dbReference>
<dbReference type="PRINTS" id="PR00254">
    <property type="entry name" value="NICOTINICR"/>
</dbReference>
<dbReference type="PRINTS" id="PR00252">
    <property type="entry name" value="NRIONCHANNEL"/>
</dbReference>
<dbReference type="SUPFAM" id="SSF90112">
    <property type="entry name" value="Neurotransmitter-gated ion-channel transmembrane pore"/>
    <property type="match status" value="1"/>
</dbReference>
<dbReference type="SUPFAM" id="SSF63712">
    <property type="entry name" value="Nicotinic receptor ligand binding domain-like"/>
    <property type="match status" value="1"/>
</dbReference>
<dbReference type="PROSITE" id="PS00236">
    <property type="entry name" value="NEUROTR_ION_CHANNEL"/>
    <property type="match status" value="1"/>
</dbReference>
<proteinExistence type="evidence at transcript level"/>
<sequence>MGPSCPVFLSFTKLSLWWLLLTPAGGEEAKRPPPRAPGDPLSSPSPTALPQGGSHTETEDRLFKHLFRGYNRWARPVPNTSDVVIVRFGLSIAQLIDVDEKNQMMTTNVWLKQEWSDYKLRWNPADFGNITSLRVPSEMIWIPDIVLYNNADGEFAVTHMTKAHLFSTGTVHWVPPAIYKSSCSIDVTFFPFDQQNCKMKFGSWTYDKAKIDLEQMEQTVDLKDYWESGEWAIVNATGTYNSKKYDCCAEIYPDVTYAFIIRRLPLFYTINLIIPCLLISCLTVLVFYLPSNCGEKITLCISVLLSLTVFLLLITEIIPSTSLVIPLIGEYLLFTMIFVTLSIVITVFVLNVHHRSPSTHTMPHWVRGTLLGCVPRWLLMNRPPPPLELCHPLHLKLSPSYHWLESNVDAEEREVVVEEEDRWACAGHVAPSVGTLCSHGHLHSGASGPKAEALLQEGELLLSPHMQKALEGVHYIADHLRSEDADSSVKEDWKYVAMVIDRIFLWLFIIVCFLGTIGLFLPPFLAGMI</sequence>
<accession>Q5IS52</accession>
<organism>
    <name type="scientific">Pan troglodytes</name>
    <name type="common">Chimpanzee</name>
    <dbReference type="NCBI Taxonomy" id="9598"/>
    <lineage>
        <taxon>Eukaryota</taxon>
        <taxon>Metazoa</taxon>
        <taxon>Chordata</taxon>
        <taxon>Craniata</taxon>
        <taxon>Vertebrata</taxon>
        <taxon>Euteleostomi</taxon>
        <taxon>Mammalia</taxon>
        <taxon>Eutheria</taxon>
        <taxon>Euarchontoglires</taxon>
        <taxon>Primates</taxon>
        <taxon>Haplorrhini</taxon>
        <taxon>Catarrhini</taxon>
        <taxon>Hominidae</taxon>
        <taxon>Pan</taxon>
    </lineage>
</organism>
<protein>
    <recommendedName>
        <fullName>Neuronal acetylcholine receptor subunit alpha-2</fullName>
    </recommendedName>
</protein>
<comment type="function">
    <text evidence="3">Component of neuronal acetylcholine receptors (nAChRs) that function as pentameric, ligand-gated cation channels with high calcium permeability among other activities. nAChRs are excitatory neurotrasnmitter receptors formed by a collection of nAChR subunits known to mediate synaptic transmission in the nervous system and the neuromuscular junction. Each nAchR subunit confers differential attributes to channel properties, including activation, deactivation and desensitization kinetics, pH sensitivity, cation permeability, and binding to allosteric modulators. CHRNA2 forms heteropentameric neuronal acetylcholine receptors with CHRNB2 and CHRNB4 and plays a role in nicotine dependence.</text>
</comment>
<comment type="catalytic activity">
    <reaction evidence="2">
        <text>Ca(2+)(in) = Ca(2+)(out)</text>
        <dbReference type="Rhea" id="RHEA:29671"/>
        <dbReference type="ChEBI" id="CHEBI:29108"/>
    </reaction>
</comment>
<comment type="catalytic activity">
    <reaction evidence="1">
        <text>K(+)(in) = K(+)(out)</text>
        <dbReference type="Rhea" id="RHEA:29463"/>
        <dbReference type="ChEBI" id="CHEBI:29103"/>
    </reaction>
</comment>
<comment type="catalytic activity">
    <reaction evidence="2">
        <text>Na(+)(in) = Na(+)(out)</text>
        <dbReference type="Rhea" id="RHEA:34963"/>
        <dbReference type="ChEBI" id="CHEBI:29101"/>
    </reaction>
</comment>
<comment type="subunit">
    <text evidence="3">Neuronal AChR is composed of two different types of subunits: alpha and non-alpha (beta). CHRNA2/alpha-2 subunit can be combined to CHRNB2/beta-2 or CHRNB4/beta-4 to give rise to functional receptors. Both CHRNA2:CHRNB2 and CHRNA2:CHRNB4 nAChR complexes are heteropentamers with two subtypes: LS (low agonist sensitivity) with a (CHRNA2)3:(CHRNB2/4)2 and HS (high agonist sensitivity) with a (CHRNA2)2:(CHRNB2/4)3 stoichiometries; the subtypes differ in their subunit binding interfaces which are involved in ligand binding.</text>
</comment>
<comment type="subcellular location">
    <subcellularLocation>
        <location evidence="3">Synaptic cell membrane</location>
        <topology evidence="4">Multi-pass membrane protein</topology>
    </subcellularLocation>
    <subcellularLocation>
        <location evidence="3">Cell membrane</location>
        <topology evidence="4">Multi-pass membrane protein</topology>
    </subcellularLocation>
</comment>
<comment type="similarity">
    <text evidence="6">Belongs to the ligand-gated ion channel (TC 1.A.9) family. Acetylcholine receptor (TC 1.A.9.1) subfamily. Alpha-2/CHRNA2 sub-subfamily.</text>
</comment>
<reference key="1">
    <citation type="journal article" date="2004" name="Cell">
        <title>Accelerated evolution of nervous system genes in the origin of Homo sapiens.</title>
        <authorList>
            <person name="Dorus S."/>
            <person name="Vallender E.J."/>
            <person name="Evans P.D."/>
            <person name="Anderson J.R."/>
            <person name="Gilbert S.L."/>
            <person name="Mahowald M."/>
            <person name="Wyckoff G.J."/>
            <person name="Malcom C.M."/>
            <person name="Lahn B.T."/>
        </authorList>
    </citation>
    <scope>NUCLEOTIDE SEQUENCE [MRNA]</scope>
</reference>
<feature type="signal peptide" evidence="4">
    <location>
        <begin position="1"/>
        <end position="26"/>
    </location>
</feature>
<feature type="chain" id="PRO_0000000342" description="Neuronal acetylcholine receptor subunit alpha-2">
    <location>
        <begin position="27"/>
        <end position="529"/>
    </location>
</feature>
<feature type="topological domain" description="Extracellular">
    <location>
        <begin position="27"/>
        <end position="264"/>
    </location>
</feature>
<feature type="transmembrane region" description="Helical" evidence="4">
    <location>
        <begin position="265"/>
        <end position="289"/>
    </location>
</feature>
<feature type="transmembrane region" description="Helical" evidence="4">
    <location>
        <begin position="297"/>
        <end position="315"/>
    </location>
</feature>
<feature type="transmembrane region" description="Helical" evidence="4">
    <location>
        <begin position="331"/>
        <end position="352"/>
    </location>
</feature>
<feature type="topological domain" description="Cytoplasmic">
    <location>
        <begin position="353"/>
        <end position="502"/>
    </location>
</feature>
<feature type="transmembrane region" description="Helical" evidence="4">
    <location>
        <begin position="503"/>
        <end position="521"/>
    </location>
</feature>
<feature type="region of interest" description="Disordered" evidence="5">
    <location>
        <begin position="27"/>
        <end position="56"/>
    </location>
</feature>
<feature type="glycosylation site" description="N-linked (GlcNAc...) asparagine" evidence="4">
    <location>
        <position position="79"/>
    </location>
</feature>
<feature type="glycosylation site" description="N-linked (GlcNAc...) asparagine" evidence="4">
    <location>
        <position position="129"/>
    </location>
</feature>
<feature type="glycosylation site" description="N-linked (GlcNAc...) asparagine" evidence="4">
    <location>
        <position position="235"/>
    </location>
</feature>
<feature type="disulfide bond" evidence="3">
    <location>
        <begin position="183"/>
        <end position="197"/>
    </location>
</feature>
<feature type="disulfide bond" description="Associated with receptor activation" evidence="3">
    <location>
        <begin position="247"/>
        <end position="248"/>
    </location>
</feature>
<name>ACHA2_PANTR</name>